<comment type="function">
    <text evidence="1 2">Catalytic component of the signal peptidase complex (SPC) which catalyzes the cleavage of N-terminal signal sequences from nascent proteins as they are translocated into the lumen of the endoplasmic reticulum (By similarity). Specifically cleaves N-terminal signal peptides that contain a hydrophobic alpha-helix (h-region) shorter than 18-20 amino acids (By similarity).</text>
</comment>
<comment type="catalytic activity">
    <reaction evidence="1">
        <text>Cleavage of hydrophobic, N-terminal signal or leader sequences from secreted and periplasmic proteins.</text>
        <dbReference type="EC" id="3.4.21.89"/>
    </reaction>
</comment>
<comment type="subunit">
    <text evidence="1 2">Component of the signal peptidase complex (SPC) composed of a catalytic subunit SEC11 and three accessory subunits SPC1, SPC2 and SPC3 (By similarity). The complex induces a local thinning of the ER membrane which is used to measure the length of the signal peptide (SP) h-region of protein substrates. This ensures the selectivity of the complex towards h-regions shorter than 18-20 amino acids (By similarity). SPC associates with the translocon complex (By similarity).</text>
</comment>
<comment type="subcellular location">
    <subcellularLocation>
        <location evidence="1">Endoplasmic reticulum membrane</location>
        <topology evidence="1">Single-pass type II membrane protein</topology>
    </subcellularLocation>
</comment>
<comment type="domain">
    <text evidence="2">The C-terminal short (CTS) helix is essential for catalytic activity. It may be accommodated as a transmembrane helix in the thinned membrane environment of the complex, similarly to the signal peptide in the complex substrates.</text>
</comment>
<comment type="similarity">
    <text evidence="4">Belongs to the peptidase S26B family.</text>
</comment>
<feature type="chain" id="PRO_0000412350" description="Signal peptidase complex catalytic subunit SEC11">
    <location>
        <begin position="1"/>
        <end position="171"/>
    </location>
</feature>
<feature type="topological domain" description="Cytoplasmic" evidence="3">
    <location>
        <begin position="1"/>
        <end position="6"/>
    </location>
</feature>
<feature type="transmembrane region" description="Helical; Signal-anchor for type II membrane protein" evidence="3">
    <location>
        <begin position="7"/>
        <end position="24"/>
    </location>
</feature>
<feature type="topological domain" description="Lumenal" evidence="3">
    <location>
        <begin position="25"/>
        <end position="171"/>
    </location>
</feature>
<feature type="region of interest" description="C-terminal short (CTS) helix" evidence="2">
    <location>
        <begin position="157"/>
        <end position="168"/>
    </location>
</feature>
<feature type="active site" description="Charge relay system" evidence="1">
    <location>
        <position position="44"/>
    </location>
</feature>
<feature type="active site" description="Charge relay system" evidence="1">
    <location>
        <position position="83"/>
    </location>
</feature>
<feature type="active site" description="Charge relay system" evidence="1">
    <location>
        <position position="113"/>
    </location>
</feature>
<protein>
    <recommendedName>
        <fullName>Signal peptidase complex catalytic subunit SEC11</fullName>
        <ecNumber evidence="1">3.4.21.89</ecNumber>
    </recommendedName>
    <alternativeName>
        <fullName>Signal peptidase I</fullName>
    </alternativeName>
</protein>
<sequence length="171" mass="19343">MNIRQQLVQLLNLAMVLSTAFMFWKGLGLVTNSNSPIVVVLSGSMEPAFQRGDILFLWNRDKYVDIGDVVVYEVKGKPIPIVHRVLREHKVTNKDRKVRQLLLTKGDNNPTDDLSLYAHKSNYLDRDEDVLGTVKAYLPKVGYVTILITENKYAKLGLLGLMALSTLLTRE</sequence>
<keyword id="KW-0256">Endoplasmic reticulum</keyword>
<keyword id="KW-0378">Hydrolase</keyword>
<keyword id="KW-0472">Membrane</keyword>
<keyword id="KW-0645">Protease</keyword>
<keyword id="KW-1185">Reference proteome</keyword>
<keyword id="KW-0735">Signal-anchor</keyword>
<keyword id="KW-0812">Transmembrane</keyword>
<keyword id="KW-1133">Transmembrane helix</keyword>
<name>SEC11_KOMPG</name>
<reference key="1">
    <citation type="journal article" date="2009" name="Nat. Biotechnol.">
        <title>Genome sequence of the recombinant protein production host Pichia pastoris.</title>
        <authorList>
            <person name="De Schutter K."/>
            <person name="Lin Y.-C."/>
            <person name="Tiels P."/>
            <person name="Van Hecke A."/>
            <person name="Glinka S."/>
            <person name="Weber-Lehmann J."/>
            <person name="Rouze P."/>
            <person name="Van de Peer Y."/>
            <person name="Callewaert N."/>
        </authorList>
    </citation>
    <scope>NUCLEOTIDE SEQUENCE [LARGE SCALE GENOMIC DNA]</scope>
    <source>
        <strain>GS115 / ATCC 20864</strain>
    </source>
</reference>
<dbReference type="EC" id="3.4.21.89" evidence="1"/>
<dbReference type="EMBL" id="FN392319">
    <property type="protein sequence ID" value="CAY68020.1"/>
    <property type="molecule type" value="Genomic_DNA"/>
</dbReference>
<dbReference type="RefSeq" id="XP_002490301.1">
    <property type="nucleotide sequence ID" value="XM_002490256.1"/>
</dbReference>
<dbReference type="SMR" id="C4QXP7"/>
<dbReference type="FunCoup" id="C4QXP7">
    <property type="interactions" value="675"/>
</dbReference>
<dbReference type="STRING" id="644223.C4QXP7"/>
<dbReference type="MEROPS" id="S26.010"/>
<dbReference type="EnsemblFungi" id="CAY68020">
    <property type="protein sequence ID" value="CAY68020"/>
    <property type="gene ID" value="PAS_chr1-4_0187"/>
</dbReference>
<dbReference type="GeneID" id="8197169"/>
<dbReference type="KEGG" id="ppa:PAS_chr1-4_0187"/>
<dbReference type="eggNOG" id="KOG3342">
    <property type="taxonomic scope" value="Eukaryota"/>
</dbReference>
<dbReference type="HOGENOM" id="CLU_089996_0_0_1"/>
<dbReference type="InParanoid" id="C4QXP7"/>
<dbReference type="OMA" id="ILMNEYP"/>
<dbReference type="OrthoDB" id="10257561at2759"/>
<dbReference type="Proteomes" id="UP000000314">
    <property type="component" value="Chromosome 1"/>
</dbReference>
<dbReference type="GO" id="GO:0005787">
    <property type="term" value="C:signal peptidase complex"/>
    <property type="evidence" value="ECO:0007669"/>
    <property type="project" value="TreeGrafter"/>
</dbReference>
<dbReference type="GO" id="GO:0004252">
    <property type="term" value="F:serine-type endopeptidase activity"/>
    <property type="evidence" value="ECO:0007669"/>
    <property type="project" value="UniProtKB-EC"/>
</dbReference>
<dbReference type="GO" id="GO:0006465">
    <property type="term" value="P:signal peptide processing"/>
    <property type="evidence" value="ECO:0007669"/>
    <property type="project" value="InterPro"/>
</dbReference>
<dbReference type="CDD" id="cd06530">
    <property type="entry name" value="S26_SPase_I"/>
    <property type="match status" value="1"/>
</dbReference>
<dbReference type="InterPro" id="IPR036286">
    <property type="entry name" value="LexA/Signal_pep-like_sf"/>
</dbReference>
<dbReference type="InterPro" id="IPR019758">
    <property type="entry name" value="Pept_S26A_signal_pept_1_CS"/>
</dbReference>
<dbReference type="InterPro" id="IPR019756">
    <property type="entry name" value="Pept_S26A_signal_pept_1_Ser-AS"/>
</dbReference>
<dbReference type="InterPro" id="IPR019533">
    <property type="entry name" value="Peptidase_S26"/>
</dbReference>
<dbReference type="InterPro" id="IPR001733">
    <property type="entry name" value="Peptidase_S26B"/>
</dbReference>
<dbReference type="NCBIfam" id="TIGR02228">
    <property type="entry name" value="sigpep_I_arch"/>
    <property type="match status" value="1"/>
</dbReference>
<dbReference type="PANTHER" id="PTHR10806">
    <property type="entry name" value="SIGNAL PEPTIDASE COMPLEX CATALYTIC SUBUNIT SEC11"/>
    <property type="match status" value="1"/>
</dbReference>
<dbReference type="PANTHER" id="PTHR10806:SF6">
    <property type="entry name" value="SIGNAL PEPTIDASE COMPLEX CATALYTIC SUBUNIT SEC11"/>
    <property type="match status" value="1"/>
</dbReference>
<dbReference type="PRINTS" id="PR00728">
    <property type="entry name" value="SIGNALPTASE"/>
</dbReference>
<dbReference type="SUPFAM" id="SSF51306">
    <property type="entry name" value="LexA/Signal peptidase"/>
    <property type="match status" value="1"/>
</dbReference>
<dbReference type="PROSITE" id="PS00501">
    <property type="entry name" value="SPASE_I_1"/>
    <property type="match status" value="1"/>
</dbReference>
<dbReference type="PROSITE" id="PS00761">
    <property type="entry name" value="SPASE_I_3"/>
    <property type="match status" value="1"/>
</dbReference>
<accession>C4QXP7</accession>
<gene>
    <name type="primary">SEC11</name>
    <name type="ordered locus">PAS_chr1-4_0187</name>
</gene>
<evidence type="ECO:0000250" key="1">
    <source>
        <dbReference type="UniProtKB" id="P15367"/>
    </source>
</evidence>
<evidence type="ECO:0000250" key="2">
    <source>
        <dbReference type="UniProtKB" id="P67812"/>
    </source>
</evidence>
<evidence type="ECO:0000255" key="3"/>
<evidence type="ECO:0000305" key="4"/>
<organism>
    <name type="scientific">Komagataella phaffii (strain GS115 / ATCC 20864)</name>
    <name type="common">Yeast</name>
    <name type="synonym">Pichia pastoris</name>
    <dbReference type="NCBI Taxonomy" id="644223"/>
    <lineage>
        <taxon>Eukaryota</taxon>
        <taxon>Fungi</taxon>
        <taxon>Dikarya</taxon>
        <taxon>Ascomycota</taxon>
        <taxon>Saccharomycotina</taxon>
        <taxon>Pichiomycetes</taxon>
        <taxon>Pichiales</taxon>
        <taxon>Pichiaceae</taxon>
        <taxon>Komagataella</taxon>
    </lineage>
</organism>
<proteinExistence type="inferred from homology"/>